<evidence type="ECO:0000255" key="1">
    <source>
        <dbReference type="HAMAP-Rule" id="MF_00151"/>
    </source>
</evidence>
<evidence type="ECO:0000305" key="2"/>
<reference key="1">
    <citation type="submission" date="2002-01" db="EMBL/GenBank/DDBJ databases">
        <title>Bartonella bacilliformis gyrA mutations conferring resistance to ciprofloxacin.</title>
        <authorList>
            <person name="Minnick M.F."/>
            <person name="Smitherman L.S."/>
            <person name="Wilson Z.R."/>
            <person name="Samuels D.S."/>
        </authorList>
    </citation>
    <scope>NUCLEOTIDE SEQUENCE [GENOMIC DNA]</scope>
</reference>
<reference key="2">
    <citation type="submission" date="2006-12" db="EMBL/GenBank/DDBJ databases">
        <authorList>
            <person name="Hendrix L."/>
            <person name="Mohamoud Y."/>
            <person name="Radune D."/>
            <person name="Shvartsbeyn A."/>
            <person name="Daugherty S."/>
            <person name="Dodson R."/>
            <person name="Durkin A.S."/>
            <person name="Harkins D."/>
            <person name="Huot H."/>
            <person name="Kothari S.P."/>
            <person name="Madupu R."/>
            <person name="Li J."/>
            <person name="Nelson W.C."/>
            <person name="Shrivastava S."/>
            <person name="Giglio M.G."/>
            <person name="Haft D."/>
            <person name="Selengut J."/>
            <person name="Fraser-Ligget C."/>
            <person name="Seshadri R."/>
        </authorList>
    </citation>
    <scope>NUCLEOTIDE SEQUENCE [LARGE SCALE GENOMIC DNA]</scope>
    <source>
        <strain>ATCC 35685 / KC583 / Herrer 020/F12,63</strain>
    </source>
</reference>
<protein>
    <recommendedName>
        <fullName evidence="1">Phosphopantetheine adenylyltransferase</fullName>
        <ecNumber evidence="1">2.7.7.3</ecNumber>
    </recommendedName>
    <alternativeName>
        <fullName evidence="1">Dephospho-CoA pyrophosphorylase</fullName>
    </alternativeName>
    <alternativeName>
        <fullName evidence="1">Pantetheine-phosphate adenylyltransferase</fullName>
        <shortName evidence="1">PPAT</shortName>
    </alternativeName>
</protein>
<comment type="function">
    <text evidence="1">Reversibly transfers an adenylyl group from ATP to 4'-phosphopantetheine, yielding dephospho-CoA (dPCoA) and pyrophosphate.</text>
</comment>
<comment type="catalytic activity">
    <reaction evidence="1">
        <text>(R)-4'-phosphopantetheine + ATP + H(+) = 3'-dephospho-CoA + diphosphate</text>
        <dbReference type="Rhea" id="RHEA:19801"/>
        <dbReference type="ChEBI" id="CHEBI:15378"/>
        <dbReference type="ChEBI" id="CHEBI:30616"/>
        <dbReference type="ChEBI" id="CHEBI:33019"/>
        <dbReference type="ChEBI" id="CHEBI:57328"/>
        <dbReference type="ChEBI" id="CHEBI:61723"/>
        <dbReference type="EC" id="2.7.7.3"/>
    </reaction>
</comment>
<comment type="cofactor">
    <cofactor evidence="1">
        <name>Mg(2+)</name>
        <dbReference type="ChEBI" id="CHEBI:18420"/>
    </cofactor>
</comment>
<comment type="pathway">
    <text evidence="1">Cofactor biosynthesis; coenzyme A biosynthesis; CoA from (R)-pantothenate: step 4/5.</text>
</comment>
<comment type="subunit">
    <text evidence="1">Homohexamer.</text>
</comment>
<comment type="subcellular location">
    <subcellularLocation>
        <location evidence="1">Cytoplasm</location>
    </subcellularLocation>
</comment>
<comment type="similarity">
    <text evidence="1">Belongs to the bacterial CoaD family.</text>
</comment>
<comment type="sequence caution" evidence="2">
    <conflict type="erroneous initiation">
        <sequence resource="EMBL-CDS" id="ABM44487"/>
    </conflict>
</comment>
<proteinExistence type="inferred from homology"/>
<gene>
    <name evidence="1" type="primary">coaD</name>
    <name type="ordered locus">BARBAKC583_0738</name>
</gene>
<organism>
    <name type="scientific">Bartonella bacilliformis (strain ATCC 35685 / KC583 / Herrer 020/F12,63)</name>
    <dbReference type="NCBI Taxonomy" id="360095"/>
    <lineage>
        <taxon>Bacteria</taxon>
        <taxon>Pseudomonadati</taxon>
        <taxon>Pseudomonadota</taxon>
        <taxon>Alphaproteobacteria</taxon>
        <taxon>Hyphomicrobiales</taxon>
        <taxon>Bartonellaceae</taxon>
        <taxon>Bartonella</taxon>
    </lineage>
</organism>
<accession>Q8RT67</accession>
<accession>A1UST3</accession>
<keyword id="KW-0067">ATP-binding</keyword>
<keyword id="KW-0173">Coenzyme A biosynthesis</keyword>
<keyword id="KW-0963">Cytoplasm</keyword>
<keyword id="KW-0460">Magnesium</keyword>
<keyword id="KW-0547">Nucleotide-binding</keyword>
<keyword id="KW-0548">Nucleotidyltransferase</keyword>
<keyword id="KW-0808">Transferase</keyword>
<dbReference type="EC" id="2.7.7.3" evidence="1"/>
<dbReference type="EMBL" id="AF469609">
    <property type="protein sequence ID" value="AAL82404.1"/>
    <property type="molecule type" value="Genomic_DNA"/>
</dbReference>
<dbReference type="EMBL" id="CP000524">
    <property type="protein sequence ID" value="ABM44487.1"/>
    <property type="status" value="ALT_INIT"/>
    <property type="molecule type" value="Genomic_DNA"/>
</dbReference>
<dbReference type="RefSeq" id="WP_005766998.1">
    <property type="nucleotide sequence ID" value="NC_008783.1"/>
</dbReference>
<dbReference type="SMR" id="Q8RT67"/>
<dbReference type="STRING" id="360095.BARBAKC583_0738"/>
<dbReference type="GeneID" id="4685071"/>
<dbReference type="KEGG" id="bbk:BARBAKC583_0738"/>
<dbReference type="PATRIC" id="fig|360095.6.peg.717"/>
<dbReference type="eggNOG" id="COG0669">
    <property type="taxonomic scope" value="Bacteria"/>
</dbReference>
<dbReference type="HOGENOM" id="CLU_100149_0_1_5"/>
<dbReference type="OrthoDB" id="9806661at2"/>
<dbReference type="UniPathway" id="UPA00241">
    <property type="reaction ID" value="UER00355"/>
</dbReference>
<dbReference type="Proteomes" id="UP000000643">
    <property type="component" value="Chromosome"/>
</dbReference>
<dbReference type="GO" id="GO:0005737">
    <property type="term" value="C:cytoplasm"/>
    <property type="evidence" value="ECO:0007669"/>
    <property type="project" value="UniProtKB-SubCell"/>
</dbReference>
<dbReference type="GO" id="GO:0005524">
    <property type="term" value="F:ATP binding"/>
    <property type="evidence" value="ECO:0007669"/>
    <property type="project" value="UniProtKB-KW"/>
</dbReference>
<dbReference type="GO" id="GO:0004595">
    <property type="term" value="F:pantetheine-phosphate adenylyltransferase activity"/>
    <property type="evidence" value="ECO:0007669"/>
    <property type="project" value="UniProtKB-UniRule"/>
</dbReference>
<dbReference type="GO" id="GO:0015937">
    <property type="term" value="P:coenzyme A biosynthetic process"/>
    <property type="evidence" value="ECO:0007669"/>
    <property type="project" value="UniProtKB-UniRule"/>
</dbReference>
<dbReference type="CDD" id="cd02163">
    <property type="entry name" value="PPAT"/>
    <property type="match status" value="1"/>
</dbReference>
<dbReference type="Gene3D" id="3.40.50.620">
    <property type="entry name" value="HUPs"/>
    <property type="match status" value="1"/>
</dbReference>
<dbReference type="HAMAP" id="MF_00151">
    <property type="entry name" value="PPAT_bact"/>
    <property type="match status" value="1"/>
</dbReference>
<dbReference type="InterPro" id="IPR004821">
    <property type="entry name" value="Cyt_trans-like"/>
</dbReference>
<dbReference type="InterPro" id="IPR001980">
    <property type="entry name" value="PPAT"/>
</dbReference>
<dbReference type="InterPro" id="IPR014729">
    <property type="entry name" value="Rossmann-like_a/b/a_fold"/>
</dbReference>
<dbReference type="NCBIfam" id="TIGR01510">
    <property type="entry name" value="coaD_prev_kdtB"/>
    <property type="match status" value="1"/>
</dbReference>
<dbReference type="NCBIfam" id="TIGR00125">
    <property type="entry name" value="cyt_tran_rel"/>
    <property type="match status" value="1"/>
</dbReference>
<dbReference type="PANTHER" id="PTHR21342">
    <property type="entry name" value="PHOSPHOPANTETHEINE ADENYLYLTRANSFERASE"/>
    <property type="match status" value="1"/>
</dbReference>
<dbReference type="PANTHER" id="PTHR21342:SF1">
    <property type="entry name" value="PHOSPHOPANTETHEINE ADENYLYLTRANSFERASE"/>
    <property type="match status" value="1"/>
</dbReference>
<dbReference type="Pfam" id="PF01467">
    <property type="entry name" value="CTP_transf_like"/>
    <property type="match status" value="1"/>
</dbReference>
<dbReference type="PRINTS" id="PR01020">
    <property type="entry name" value="LPSBIOSNTHSS"/>
</dbReference>
<dbReference type="SUPFAM" id="SSF52374">
    <property type="entry name" value="Nucleotidylyl transferase"/>
    <property type="match status" value="1"/>
</dbReference>
<sequence length="164" mass="17912">MTIAFYAGSFDPITNGHLDVLRGSLLLADKVVVAIGVQAQKQSLFSFEERVDLITQVGRDLLNVGPDRLQVISFNNLLIDTAREIGASFLVRGLRDGTDFDYEMQMAGMNGIMAPELQTVFLPASISGRVITSTLVHQIAAMGGDVTHFVPQNVAQALRLKFKF</sequence>
<feature type="chain" id="PRO_0000156171" description="Phosphopantetheine adenylyltransferase">
    <location>
        <begin position="1"/>
        <end position="164"/>
    </location>
</feature>
<feature type="binding site" evidence="1">
    <location>
        <begin position="9"/>
        <end position="10"/>
    </location>
    <ligand>
        <name>ATP</name>
        <dbReference type="ChEBI" id="CHEBI:30616"/>
    </ligand>
</feature>
<feature type="binding site" evidence="1">
    <location>
        <position position="9"/>
    </location>
    <ligand>
        <name>substrate</name>
    </ligand>
</feature>
<feature type="binding site" evidence="1">
    <location>
        <position position="17"/>
    </location>
    <ligand>
        <name>ATP</name>
        <dbReference type="ChEBI" id="CHEBI:30616"/>
    </ligand>
</feature>
<feature type="binding site" evidence="1">
    <location>
        <position position="41"/>
    </location>
    <ligand>
        <name>substrate</name>
    </ligand>
</feature>
<feature type="binding site" evidence="1">
    <location>
        <position position="78"/>
    </location>
    <ligand>
        <name>substrate</name>
    </ligand>
</feature>
<feature type="binding site" evidence="1">
    <location>
        <position position="92"/>
    </location>
    <ligand>
        <name>substrate</name>
    </ligand>
</feature>
<feature type="binding site" evidence="1">
    <location>
        <begin position="93"/>
        <end position="95"/>
    </location>
    <ligand>
        <name>ATP</name>
        <dbReference type="ChEBI" id="CHEBI:30616"/>
    </ligand>
</feature>
<feature type="binding site" evidence="1">
    <location>
        <position position="103"/>
    </location>
    <ligand>
        <name>ATP</name>
        <dbReference type="ChEBI" id="CHEBI:30616"/>
    </ligand>
</feature>
<feature type="binding site" evidence="1">
    <location>
        <begin position="128"/>
        <end position="134"/>
    </location>
    <ligand>
        <name>ATP</name>
        <dbReference type="ChEBI" id="CHEBI:30616"/>
    </ligand>
</feature>
<feature type="site" description="Transition state stabilizer" evidence="1">
    <location>
        <position position="17"/>
    </location>
</feature>
<name>COAD_BARBK</name>